<feature type="chain" id="PRO_0000108500" description="Transcriptional regulator MraZ">
    <location>
        <begin position="1"/>
        <end position="152"/>
    </location>
</feature>
<feature type="domain" description="SpoVT-AbrB 1" evidence="2">
    <location>
        <begin position="5"/>
        <end position="51"/>
    </location>
</feature>
<feature type="domain" description="SpoVT-AbrB 2" evidence="2">
    <location>
        <begin position="80"/>
        <end position="123"/>
    </location>
</feature>
<dbReference type="EMBL" id="AE017282">
    <property type="protein sequence ID" value="AAU91462.1"/>
    <property type="molecule type" value="Genomic_DNA"/>
</dbReference>
<dbReference type="RefSeq" id="WP_010961662.1">
    <property type="nucleotide sequence ID" value="NC_002977.6"/>
</dbReference>
<dbReference type="SMR" id="Q604U9"/>
<dbReference type="STRING" id="243233.MCA2437"/>
<dbReference type="GeneID" id="88224638"/>
<dbReference type="KEGG" id="mca:MCA2437"/>
<dbReference type="eggNOG" id="COG2001">
    <property type="taxonomic scope" value="Bacteria"/>
</dbReference>
<dbReference type="HOGENOM" id="CLU_107907_2_0_6"/>
<dbReference type="Proteomes" id="UP000006821">
    <property type="component" value="Chromosome"/>
</dbReference>
<dbReference type="GO" id="GO:0005737">
    <property type="term" value="C:cytoplasm"/>
    <property type="evidence" value="ECO:0007669"/>
    <property type="project" value="UniProtKB-UniRule"/>
</dbReference>
<dbReference type="GO" id="GO:0009295">
    <property type="term" value="C:nucleoid"/>
    <property type="evidence" value="ECO:0007669"/>
    <property type="project" value="UniProtKB-SubCell"/>
</dbReference>
<dbReference type="GO" id="GO:0003700">
    <property type="term" value="F:DNA-binding transcription factor activity"/>
    <property type="evidence" value="ECO:0007669"/>
    <property type="project" value="UniProtKB-UniRule"/>
</dbReference>
<dbReference type="GO" id="GO:0000976">
    <property type="term" value="F:transcription cis-regulatory region binding"/>
    <property type="evidence" value="ECO:0007669"/>
    <property type="project" value="TreeGrafter"/>
</dbReference>
<dbReference type="GO" id="GO:2000143">
    <property type="term" value="P:negative regulation of DNA-templated transcription initiation"/>
    <property type="evidence" value="ECO:0007669"/>
    <property type="project" value="TreeGrafter"/>
</dbReference>
<dbReference type="CDD" id="cd16321">
    <property type="entry name" value="MraZ_C"/>
    <property type="match status" value="1"/>
</dbReference>
<dbReference type="CDD" id="cd16320">
    <property type="entry name" value="MraZ_N"/>
    <property type="match status" value="1"/>
</dbReference>
<dbReference type="Gene3D" id="3.40.1550.20">
    <property type="entry name" value="Transcriptional regulator MraZ domain"/>
    <property type="match status" value="1"/>
</dbReference>
<dbReference type="HAMAP" id="MF_01008">
    <property type="entry name" value="MraZ"/>
    <property type="match status" value="1"/>
</dbReference>
<dbReference type="InterPro" id="IPR003444">
    <property type="entry name" value="MraZ"/>
</dbReference>
<dbReference type="InterPro" id="IPR035644">
    <property type="entry name" value="MraZ_C"/>
</dbReference>
<dbReference type="InterPro" id="IPR020603">
    <property type="entry name" value="MraZ_dom"/>
</dbReference>
<dbReference type="InterPro" id="IPR035642">
    <property type="entry name" value="MraZ_N"/>
</dbReference>
<dbReference type="InterPro" id="IPR038619">
    <property type="entry name" value="MraZ_sf"/>
</dbReference>
<dbReference type="InterPro" id="IPR007159">
    <property type="entry name" value="SpoVT-AbrB_dom"/>
</dbReference>
<dbReference type="InterPro" id="IPR037914">
    <property type="entry name" value="SpoVT-AbrB_sf"/>
</dbReference>
<dbReference type="NCBIfam" id="TIGR00242">
    <property type="entry name" value="division/cell wall cluster transcriptional repressor MraZ"/>
    <property type="match status" value="1"/>
</dbReference>
<dbReference type="PANTHER" id="PTHR34701">
    <property type="entry name" value="TRANSCRIPTIONAL REGULATOR MRAZ"/>
    <property type="match status" value="1"/>
</dbReference>
<dbReference type="PANTHER" id="PTHR34701:SF1">
    <property type="entry name" value="TRANSCRIPTIONAL REGULATOR MRAZ"/>
    <property type="match status" value="1"/>
</dbReference>
<dbReference type="Pfam" id="PF02381">
    <property type="entry name" value="MraZ"/>
    <property type="match status" value="2"/>
</dbReference>
<dbReference type="SUPFAM" id="SSF89447">
    <property type="entry name" value="AbrB/MazE/MraZ-like"/>
    <property type="match status" value="1"/>
</dbReference>
<dbReference type="PROSITE" id="PS51740">
    <property type="entry name" value="SPOVT_ABRB"/>
    <property type="match status" value="2"/>
</dbReference>
<organism>
    <name type="scientific">Methylococcus capsulatus (strain ATCC 33009 / NCIMB 11132 / Bath)</name>
    <dbReference type="NCBI Taxonomy" id="243233"/>
    <lineage>
        <taxon>Bacteria</taxon>
        <taxon>Pseudomonadati</taxon>
        <taxon>Pseudomonadota</taxon>
        <taxon>Gammaproteobacteria</taxon>
        <taxon>Methylococcales</taxon>
        <taxon>Methylococcaceae</taxon>
        <taxon>Methylococcus</taxon>
    </lineage>
</organism>
<evidence type="ECO:0000255" key="1">
    <source>
        <dbReference type="HAMAP-Rule" id="MF_01008"/>
    </source>
</evidence>
<evidence type="ECO:0000255" key="2">
    <source>
        <dbReference type="PROSITE-ProRule" id="PRU01076"/>
    </source>
</evidence>
<keyword id="KW-0963">Cytoplasm</keyword>
<keyword id="KW-0238">DNA-binding</keyword>
<keyword id="KW-1185">Reference proteome</keyword>
<keyword id="KW-0677">Repeat</keyword>
<keyword id="KW-0804">Transcription</keyword>
<keyword id="KW-0805">Transcription regulation</keyword>
<gene>
    <name evidence="1" type="primary">mraZ</name>
    <name type="ordered locus">MCA2437</name>
</gene>
<sequence>MFRGVNSISLDDKGRMAVPTRYRSELRESCEGQLVVTVGTDTCLLLFPLPEFEELERKLVKLPALNKQVKRLQRLLIGHAAECELDGQGRFLIPEPLRRFASLDKQVVLIGQGNKFEIWDEVLWDRCRQEWLEEASLEGLEDMGPELGALAF</sequence>
<reference key="1">
    <citation type="journal article" date="2004" name="PLoS Biol.">
        <title>Genomic insights into methanotrophy: the complete genome sequence of Methylococcus capsulatus (Bath).</title>
        <authorList>
            <person name="Ward N.L."/>
            <person name="Larsen O."/>
            <person name="Sakwa J."/>
            <person name="Bruseth L."/>
            <person name="Khouri H.M."/>
            <person name="Durkin A.S."/>
            <person name="Dimitrov G."/>
            <person name="Jiang L."/>
            <person name="Scanlan D."/>
            <person name="Kang K.H."/>
            <person name="Lewis M.R."/>
            <person name="Nelson K.E."/>
            <person name="Methe B.A."/>
            <person name="Wu M."/>
            <person name="Heidelberg J.F."/>
            <person name="Paulsen I.T."/>
            <person name="Fouts D.E."/>
            <person name="Ravel J."/>
            <person name="Tettelin H."/>
            <person name="Ren Q."/>
            <person name="Read T.D."/>
            <person name="DeBoy R.T."/>
            <person name="Seshadri R."/>
            <person name="Salzberg S.L."/>
            <person name="Jensen H.B."/>
            <person name="Birkeland N.K."/>
            <person name="Nelson W.C."/>
            <person name="Dodson R.J."/>
            <person name="Grindhaug S.H."/>
            <person name="Holt I.E."/>
            <person name="Eidhammer I."/>
            <person name="Jonasen I."/>
            <person name="Vanaken S."/>
            <person name="Utterback T.R."/>
            <person name="Feldblyum T.V."/>
            <person name="Fraser C.M."/>
            <person name="Lillehaug J.R."/>
            <person name="Eisen J.A."/>
        </authorList>
    </citation>
    <scope>NUCLEOTIDE SEQUENCE [LARGE SCALE GENOMIC DNA]</scope>
    <source>
        <strain>ATCC 33009 / NCIMB 11132 / Bath</strain>
    </source>
</reference>
<accession>Q604U9</accession>
<comment type="subunit">
    <text evidence="1">Forms oligomers.</text>
</comment>
<comment type="subcellular location">
    <subcellularLocation>
        <location evidence="1">Cytoplasm</location>
        <location evidence="1">Nucleoid</location>
    </subcellularLocation>
</comment>
<comment type="similarity">
    <text evidence="1">Belongs to the MraZ family.</text>
</comment>
<name>MRAZ_METCA</name>
<protein>
    <recommendedName>
        <fullName>Transcriptional regulator MraZ</fullName>
    </recommendedName>
</protein>
<proteinExistence type="inferred from homology"/>